<sequence length="212" mass="23092">MITIALPKGALLKDSISTFKKAGLDFSNALEENNRSLTFESNCKRAKALLVRNGDVPVYVSYGQADLGIVGYDVLRESELKVAKLLDLGFGGCHMSLAVKKNSNYLKPTDLPANCKVASKFIKTARSYFEELNIPVEIVHLTGSVELGPITGMAEAIVDLVATGKTLKENGLIKIDDLYYSTARLIGNPLSMRLDDNHLRDTILSIESTNAL</sequence>
<gene>
    <name evidence="1" type="primary">hisG</name>
    <name type="ordered locus">A9601_06161</name>
</gene>
<proteinExistence type="inferred from homology"/>
<dbReference type="EC" id="2.4.2.17" evidence="1"/>
<dbReference type="EMBL" id="CP000551">
    <property type="protein sequence ID" value="ABM69902.1"/>
    <property type="molecule type" value="Genomic_DNA"/>
</dbReference>
<dbReference type="RefSeq" id="WP_011818064.1">
    <property type="nucleotide sequence ID" value="NC_008816.1"/>
</dbReference>
<dbReference type="SMR" id="A2BQ41"/>
<dbReference type="STRING" id="146891.A9601_06161"/>
<dbReference type="KEGG" id="pmb:A9601_06161"/>
<dbReference type="eggNOG" id="COG0040">
    <property type="taxonomic scope" value="Bacteria"/>
</dbReference>
<dbReference type="HOGENOM" id="CLU_038115_2_0_3"/>
<dbReference type="OrthoDB" id="9801867at2"/>
<dbReference type="UniPathway" id="UPA00031">
    <property type="reaction ID" value="UER00006"/>
</dbReference>
<dbReference type="Proteomes" id="UP000002590">
    <property type="component" value="Chromosome"/>
</dbReference>
<dbReference type="GO" id="GO:0005737">
    <property type="term" value="C:cytoplasm"/>
    <property type="evidence" value="ECO:0007669"/>
    <property type="project" value="UniProtKB-SubCell"/>
</dbReference>
<dbReference type="GO" id="GO:0005524">
    <property type="term" value="F:ATP binding"/>
    <property type="evidence" value="ECO:0007669"/>
    <property type="project" value="UniProtKB-KW"/>
</dbReference>
<dbReference type="GO" id="GO:0003879">
    <property type="term" value="F:ATP phosphoribosyltransferase activity"/>
    <property type="evidence" value="ECO:0007669"/>
    <property type="project" value="UniProtKB-UniRule"/>
</dbReference>
<dbReference type="GO" id="GO:0000105">
    <property type="term" value="P:L-histidine biosynthetic process"/>
    <property type="evidence" value="ECO:0007669"/>
    <property type="project" value="UniProtKB-UniRule"/>
</dbReference>
<dbReference type="CDD" id="cd13595">
    <property type="entry name" value="PBP2_HisGs"/>
    <property type="match status" value="1"/>
</dbReference>
<dbReference type="FunFam" id="3.40.190.10:FF:000008">
    <property type="entry name" value="ATP phosphoribosyltransferase"/>
    <property type="match status" value="1"/>
</dbReference>
<dbReference type="Gene3D" id="3.40.190.10">
    <property type="entry name" value="Periplasmic binding protein-like II"/>
    <property type="match status" value="2"/>
</dbReference>
<dbReference type="HAMAP" id="MF_01018">
    <property type="entry name" value="HisG_Short"/>
    <property type="match status" value="1"/>
</dbReference>
<dbReference type="InterPro" id="IPR013820">
    <property type="entry name" value="ATP_PRibTrfase_cat"/>
</dbReference>
<dbReference type="InterPro" id="IPR018198">
    <property type="entry name" value="ATP_PRibTrfase_CS"/>
</dbReference>
<dbReference type="InterPro" id="IPR001348">
    <property type="entry name" value="ATP_PRibTrfase_HisG"/>
</dbReference>
<dbReference type="InterPro" id="IPR024893">
    <property type="entry name" value="ATP_PRibTrfase_HisG_short"/>
</dbReference>
<dbReference type="NCBIfam" id="TIGR00070">
    <property type="entry name" value="hisG"/>
    <property type="match status" value="1"/>
</dbReference>
<dbReference type="PANTHER" id="PTHR21403:SF8">
    <property type="entry name" value="ATP PHOSPHORIBOSYLTRANSFERASE"/>
    <property type="match status" value="1"/>
</dbReference>
<dbReference type="PANTHER" id="PTHR21403">
    <property type="entry name" value="ATP PHOSPHORIBOSYLTRANSFERASE ATP-PRTASE"/>
    <property type="match status" value="1"/>
</dbReference>
<dbReference type="Pfam" id="PF01634">
    <property type="entry name" value="HisG"/>
    <property type="match status" value="1"/>
</dbReference>
<dbReference type="SUPFAM" id="SSF53850">
    <property type="entry name" value="Periplasmic binding protein-like II"/>
    <property type="match status" value="1"/>
</dbReference>
<dbReference type="PROSITE" id="PS01316">
    <property type="entry name" value="ATP_P_PHORIBOSYLTR"/>
    <property type="match status" value="1"/>
</dbReference>
<keyword id="KW-0028">Amino-acid biosynthesis</keyword>
<keyword id="KW-0067">ATP-binding</keyword>
<keyword id="KW-0963">Cytoplasm</keyword>
<keyword id="KW-0328">Glycosyltransferase</keyword>
<keyword id="KW-0368">Histidine biosynthesis</keyword>
<keyword id="KW-0547">Nucleotide-binding</keyword>
<keyword id="KW-0808">Transferase</keyword>
<organism>
    <name type="scientific">Prochlorococcus marinus (strain AS9601)</name>
    <dbReference type="NCBI Taxonomy" id="146891"/>
    <lineage>
        <taxon>Bacteria</taxon>
        <taxon>Bacillati</taxon>
        <taxon>Cyanobacteriota</taxon>
        <taxon>Cyanophyceae</taxon>
        <taxon>Synechococcales</taxon>
        <taxon>Prochlorococcaceae</taxon>
        <taxon>Prochlorococcus</taxon>
    </lineage>
</organism>
<accession>A2BQ41</accession>
<feature type="chain" id="PRO_1000063296" description="ATP phosphoribosyltransferase">
    <location>
        <begin position="1"/>
        <end position="212"/>
    </location>
</feature>
<reference key="1">
    <citation type="journal article" date="2007" name="PLoS Genet.">
        <title>Patterns and implications of gene gain and loss in the evolution of Prochlorococcus.</title>
        <authorList>
            <person name="Kettler G.C."/>
            <person name="Martiny A.C."/>
            <person name="Huang K."/>
            <person name="Zucker J."/>
            <person name="Coleman M.L."/>
            <person name="Rodrigue S."/>
            <person name="Chen F."/>
            <person name="Lapidus A."/>
            <person name="Ferriera S."/>
            <person name="Johnson J."/>
            <person name="Steglich C."/>
            <person name="Church G.M."/>
            <person name="Richardson P."/>
            <person name="Chisholm S.W."/>
        </authorList>
    </citation>
    <scope>NUCLEOTIDE SEQUENCE [LARGE SCALE GENOMIC DNA]</scope>
    <source>
        <strain>AS9601</strain>
    </source>
</reference>
<evidence type="ECO:0000255" key="1">
    <source>
        <dbReference type="HAMAP-Rule" id="MF_01018"/>
    </source>
</evidence>
<comment type="function">
    <text evidence="1">Catalyzes the condensation of ATP and 5-phosphoribose 1-diphosphate to form N'-(5'-phosphoribosyl)-ATP (PR-ATP). Has a crucial role in the pathway because the rate of histidine biosynthesis seems to be controlled primarily by regulation of HisG enzymatic activity.</text>
</comment>
<comment type="catalytic activity">
    <reaction evidence="1">
        <text>1-(5-phospho-beta-D-ribosyl)-ATP + diphosphate = 5-phospho-alpha-D-ribose 1-diphosphate + ATP</text>
        <dbReference type="Rhea" id="RHEA:18473"/>
        <dbReference type="ChEBI" id="CHEBI:30616"/>
        <dbReference type="ChEBI" id="CHEBI:33019"/>
        <dbReference type="ChEBI" id="CHEBI:58017"/>
        <dbReference type="ChEBI" id="CHEBI:73183"/>
        <dbReference type="EC" id="2.4.2.17"/>
    </reaction>
</comment>
<comment type="pathway">
    <text evidence="1">Amino-acid biosynthesis; L-histidine biosynthesis; L-histidine from 5-phospho-alpha-D-ribose 1-diphosphate: step 1/9.</text>
</comment>
<comment type="subunit">
    <text evidence="1">Heteromultimer composed of HisG and HisZ subunits.</text>
</comment>
<comment type="subcellular location">
    <subcellularLocation>
        <location evidence="1">Cytoplasm</location>
    </subcellularLocation>
</comment>
<comment type="domain">
    <text>Lacks the C-terminal regulatory region which is replaced by HisZ.</text>
</comment>
<comment type="similarity">
    <text evidence="1">Belongs to the ATP phosphoribosyltransferase family. Short subfamily.</text>
</comment>
<name>HIS1_PROMS</name>
<protein>
    <recommendedName>
        <fullName evidence="1">ATP phosphoribosyltransferase</fullName>
        <shortName evidence="1">ATP-PRT</shortName>
        <shortName evidence="1">ATP-PRTase</shortName>
        <ecNumber evidence="1">2.4.2.17</ecNumber>
    </recommendedName>
</protein>